<accession>Q087K7</accession>
<protein>
    <recommendedName>
        <fullName evidence="1">Ribosomal RNA large subunit methyltransferase H</fullName>
        <ecNumber evidence="1">2.1.1.177</ecNumber>
    </recommendedName>
    <alternativeName>
        <fullName evidence="1">23S rRNA (pseudouridine1915-N3)-methyltransferase</fullName>
    </alternativeName>
    <alternativeName>
        <fullName evidence="1">23S rRNA m3Psi1915 methyltransferase</fullName>
    </alternativeName>
    <alternativeName>
        <fullName evidence="1">rRNA (pseudouridine-N3-)-methyltransferase RlmH</fullName>
    </alternativeName>
</protein>
<proteinExistence type="inferred from homology"/>
<organism>
    <name type="scientific">Shewanella frigidimarina (strain NCIMB 400)</name>
    <dbReference type="NCBI Taxonomy" id="318167"/>
    <lineage>
        <taxon>Bacteria</taxon>
        <taxon>Pseudomonadati</taxon>
        <taxon>Pseudomonadota</taxon>
        <taxon>Gammaproteobacteria</taxon>
        <taxon>Alteromonadales</taxon>
        <taxon>Shewanellaceae</taxon>
        <taxon>Shewanella</taxon>
    </lineage>
</organism>
<comment type="function">
    <text evidence="1">Specifically methylates the pseudouridine at position 1915 (m3Psi1915) in 23S rRNA.</text>
</comment>
<comment type="catalytic activity">
    <reaction evidence="1">
        <text>pseudouridine(1915) in 23S rRNA + S-adenosyl-L-methionine = N(3)-methylpseudouridine(1915) in 23S rRNA + S-adenosyl-L-homocysteine + H(+)</text>
        <dbReference type="Rhea" id="RHEA:42752"/>
        <dbReference type="Rhea" id="RHEA-COMP:10221"/>
        <dbReference type="Rhea" id="RHEA-COMP:10222"/>
        <dbReference type="ChEBI" id="CHEBI:15378"/>
        <dbReference type="ChEBI" id="CHEBI:57856"/>
        <dbReference type="ChEBI" id="CHEBI:59789"/>
        <dbReference type="ChEBI" id="CHEBI:65314"/>
        <dbReference type="ChEBI" id="CHEBI:74486"/>
        <dbReference type="EC" id="2.1.1.177"/>
    </reaction>
</comment>
<comment type="subunit">
    <text evidence="1">Homodimer.</text>
</comment>
<comment type="subcellular location">
    <subcellularLocation>
        <location evidence="1">Cytoplasm</location>
    </subcellularLocation>
</comment>
<comment type="similarity">
    <text evidence="1">Belongs to the RNA methyltransferase RlmH family.</text>
</comment>
<name>RLMH_SHEFN</name>
<feature type="chain" id="PRO_0000260605" description="Ribosomal RNA large subunit methyltransferase H">
    <location>
        <begin position="1"/>
        <end position="156"/>
    </location>
</feature>
<feature type="binding site" evidence="1">
    <location>
        <position position="73"/>
    </location>
    <ligand>
        <name>S-adenosyl-L-methionine</name>
        <dbReference type="ChEBI" id="CHEBI:59789"/>
    </ligand>
</feature>
<feature type="binding site" evidence="1">
    <location>
        <position position="104"/>
    </location>
    <ligand>
        <name>S-adenosyl-L-methionine</name>
        <dbReference type="ChEBI" id="CHEBI:59789"/>
    </ligand>
</feature>
<feature type="binding site" evidence="1">
    <location>
        <begin position="123"/>
        <end position="128"/>
    </location>
    <ligand>
        <name>S-adenosyl-L-methionine</name>
        <dbReference type="ChEBI" id="CHEBI:59789"/>
    </ligand>
</feature>
<gene>
    <name evidence="1" type="primary">rlmH</name>
    <name type="ordered locus">Sfri_0700</name>
</gene>
<reference key="1">
    <citation type="submission" date="2006-08" db="EMBL/GenBank/DDBJ databases">
        <title>Complete sequence of Shewanella frigidimarina NCIMB 400.</title>
        <authorList>
            <consortium name="US DOE Joint Genome Institute"/>
            <person name="Copeland A."/>
            <person name="Lucas S."/>
            <person name="Lapidus A."/>
            <person name="Barry K."/>
            <person name="Detter J.C."/>
            <person name="Glavina del Rio T."/>
            <person name="Hammon N."/>
            <person name="Israni S."/>
            <person name="Dalin E."/>
            <person name="Tice H."/>
            <person name="Pitluck S."/>
            <person name="Fredrickson J.K."/>
            <person name="Kolker E."/>
            <person name="McCuel L.A."/>
            <person name="DiChristina T."/>
            <person name="Nealson K.H."/>
            <person name="Newman D."/>
            <person name="Tiedje J.M."/>
            <person name="Zhou J."/>
            <person name="Romine M.F."/>
            <person name="Culley D.E."/>
            <person name="Serres M."/>
            <person name="Chertkov O."/>
            <person name="Brettin T."/>
            <person name="Bruce D."/>
            <person name="Han C."/>
            <person name="Tapia R."/>
            <person name="Gilna P."/>
            <person name="Schmutz J."/>
            <person name="Larimer F."/>
            <person name="Land M."/>
            <person name="Hauser L."/>
            <person name="Kyrpides N."/>
            <person name="Mikhailova N."/>
            <person name="Richardson P."/>
        </authorList>
    </citation>
    <scope>NUCLEOTIDE SEQUENCE [LARGE SCALE GENOMIC DNA]</scope>
    <source>
        <strain>NCIMB 400</strain>
    </source>
</reference>
<evidence type="ECO:0000255" key="1">
    <source>
        <dbReference type="HAMAP-Rule" id="MF_00658"/>
    </source>
</evidence>
<keyword id="KW-0963">Cytoplasm</keyword>
<keyword id="KW-0489">Methyltransferase</keyword>
<keyword id="KW-1185">Reference proteome</keyword>
<keyword id="KW-0698">rRNA processing</keyword>
<keyword id="KW-0949">S-adenosyl-L-methionine</keyword>
<keyword id="KW-0808">Transferase</keyword>
<dbReference type="EC" id="2.1.1.177" evidence="1"/>
<dbReference type="EMBL" id="CP000447">
    <property type="protein sequence ID" value="ABI70558.1"/>
    <property type="molecule type" value="Genomic_DNA"/>
</dbReference>
<dbReference type="RefSeq" id="WP_011636183.1">
    <property type="nucleotide sequence ID" value="NC_008345.1"/>
</dbReference>
<dbReference type="SMR" id="Q087K7"/>
<dbReference type="STRING" id="318167.Sfri_0700"/>
<dbReference type="KEGG" id="sfr:Sfri_0700"/>
<dbReference type="eggNOG" id="COG1576">
    <property type="taxonomic scope" value="Bacteria"/>
</dbReference>
<dbReference type="HOGENOM" id="CLU_100552_1_0_6"/>
<dbReference type="OrthoDB" id="9806643at2"/>
<dbReference type="Proteomes" id="UP000000684">
    <property type="component" value="Chromosome"/>
</dbReference>
<dbReference type="GO" id="GO:0005737">
    <property type="term" value="C:cytoplasm"/>
    <property type="evidence" value="ECO:0007669"/>
    <property type="project" value="UniProtKB-SubCell"/>
</dbReference>
<dbReference type="GO" id="GO:0070038">
    <property type="term" value="F:rRNA (pseudouridine-N3-)-methyltransferase activity"/>
    <property type="evidence" value="ECO:0007669"/>
    <property type="project" value="UniProtKB-UniRule"/>
</dbReference>
<dbReference type="CDD" id="cd18081">
    <property type="entry name" value="RlmH-like"/>
    <property type="match status" value="1"/>
</dbReference>
<dbReference type="Gene3D" id="3.40.1280.10">
    <property type="match status" value="1"/>
</dbReference>
<dbReference type="HAMAP" id="MF_00658">
    <property type="entry name" value="23SrRNA_methyltr_H"/>
    <property type="match status" value="1"/>
</dbReference>
<dbReference type="InterPro" id="IPR029028">
    <property type="entry name" value="Alpha/beta_knot_MTases"/>
</dbReference>
<dbReference type="InterPro" id="IPR003742">
    <property type="entry name" value="RlmH-like"/>
</dbReference>
<dbReference type="InterPro" id="IPR029026">
    <property type="entry name" value="tRNA_m1G_MTases_N"/>
</dbReference>
<dbReference type="NCBIfam" id="NF000984">
    <property type="entry name" value="PRK00103.1-1"/>
    <property type="match status" value="1"/>
</dbReference>
<dbReference type="NCBIfam" id="NF000986">
    <property type="entry name" value="PRK00103.1-4"/>
    <property type="match status" value="1"/>
</dbReference>
<dbReference type="NCBIfam" id="TIGR00246">
    <property type="entry name" value="tRNA_RlmH_YbeA"/>
    <property type="match status" value="1"/>
</dbReference>
<dbReference type="PANTHER" id="PTHR33603">
    <property type="entry name" value="METHYLTRANSFERASE"/>
    <property type="match status" value="1"/>
</dbReference>
<dbReference type="PANTHER" id="PTHR33603:SF1">
    <property type="entry name" value="RIBOSOMAL RNA LARGE SUBUNIT METHYLTRANSFERASE H"/>
    <property type="match status" value="1"/>
</dbReference>
<dbReference type="Pfam" id="PF02590">
    <property type="entry name" value="SPOUT_MTase"/>
    <property type="match status" value="1"/>
</dbReference>
<dbReference type="PIRSF" id="PIRSF004505">
    <property type="entry name" value="MT_bac"/>
    <property type="match status" value="1"/>
</dbReference>
<dbReference type="SUPFAM" id="SSF75217">
    <property type="entry name" value="alpha/beta knot"/>
    <property type="match status" value="1"/>
</dbReference>
<sequence>MKLQLIAVGTKMPDWVTRGFEEYQRRFPRDMALELIEIPAGKRGKNADIARILHKEGELMLAAVAKGNHIVSLDLPGKNWTTPELAEQMTKWQLDGRDVSLLIGGPEGLSPACKEAANQSWCLSALTLPHPLVRVIVAESLYRAWSVNTNHPYHRE</sequence>